<evidence type="ECO:0000250" key="1"/>
<evidence type="ECO:0000250" key="2">
    <source>
        <dbReference type="UniProtKB" id="O08689"/>
    </source>
</evidence>
<evidence type="ECO:0000255" key="3"/>
<evidence type="ECO:0000305" key="4"/>
<comment type="function">
    <text>Acts specifically as a negative regulator of skeletal muscle growth.</text>
</comment>
<comment type="subunit">
    <text evidence="1">Homodimer; disulfide-linked.</text>
</comment>
<comment type="subcellular location">
    <subcellularLocation>
        <location evidence="1">Secreted</location>
    </subcellularLocation>
</comment>
<comment type="similarity">
    <text evidence="4">Belongs to the TGF-beta family.</text>
</comment>
<comment type="sequence caution" evidence="4">
    <conflict type="erroneous initiation">
        <sequence resource="EMBL-CDS" id="AAB86692"/>
    </conflict>
    <text>Truncated N-terminus.</text>
</comment>
<sequence length="375" mass="42784">MQKLAVYVYIYLFMQILVHPVALDGSSQPTENAEKDGLCNACTWRQNTKSSRIEAIKIQILSKLRLEQAPNISRDVIKQLLPKAPPLQELIDQYDVQRDDSSDGSLEDDDYHATTETIITMPTESDFLVQMEGKPKCCFFKFSSKIQYNKVVKAQLWIYLRQVQKPTTVFVQILRLIKPMKDGTRYTGIRSLKLDMNPGTGIWQSIDVKTVLQNWLKQPESNLGIEIKAFDENGRDLAVTFPGPGEDGLNPFLEVRVTDTPKRSRRDFGLDCDEHSTESRCCRYPLTVDFEAFGWDWIIAPKRYKANYCSGECEFVFLQKYPHTHLVHQANPRGSAGPCCTPTKMSPINMLYFNGKEQIIYGKIPAMVVDRCGCS</sequence>
<organism>
    <name type="scientific">Meleagris gallopavo</name>
    <name type="common">Wild turkey</name>
    <dbReference type="NCBI Taxonomy" id="9103"/>
    <lineage>
        <taxon>Eukaryota</taxon>
        <taxon>Metazoa</taxon>
        <taxon>Chordata</taxon>
        <taxon>Craniata</taxon>
        <taxon>Vertebrata</taxon>
        <taxon>Euteleostomi</taxon>
        <taxon>Archelosauria</taxon>
        <taxon>Archosauria</taxon>
        <taxon>Dinosauria</taxon>
        <taxon>Saurischia</taxon>
        <taxon>Theropoda</taxon>
        <taxon>Coelurosauria</taxon>
        <taxon>Aves</taxon>
        <taxon>Neognathae</taxon>
        <taxon>Galloanserae</taxon>
        <taxon>Galliformes</taxon>
        <taxon>Phasianidae</taxon>
        <taxon>Meleagridinae</taxon>
        <taxon>Meleagris</taxon>
    </lineage>
</organism>
<proteinExistence type="evidence at transcript level"/>
<gene>
    <name type="primary">MSTN</name>
    <name type="synonym">GDF8</name>
</gene>
<keyword id="KW-0165">Cleavage on pair of basic residues</keyword>
<keyword id="KW-0202">Cytokine</keyword>
<keyword id="KW-1015">Disulfide bond</keyword>
<keyword id="KW-0325">Glycoprotein</keyword>
<keyword id="KW-0339">Growth factor</keyword>
<keyword id="KW-1185">Reference proteome</keyword>
<keyword id="KW-0964">Secreted</keyword>
<keyword id="KW-0732">Signal</keyword>
<feature type="signal peptide" evidence="3">
    <location>
        <begin position="1"/>
        <end position="23"/>
    </location>
</feature>
<feature type="propeptide" id="PRO_0000033974" evidence="3">
    <location>
        <begin position="24"/>
        <end position="266"/>
    </location>
</feature>
<feature type="chain" id="PRO_0000033975" description="Growth/differentiation factor 8">
    <location>
        <begin position="267"/>
        <end position="375"/>
    </location>
</feature>
<feature type="glycosylation site" description="N-linked (GlcNAc...) asparagine" evidence="3">
    <location>
        <position position="71"/>
    </location>
</feature>
<feature type="disulfide bond" evidence="2">
    <location>
        <begin position="272"/>
        <end position="282"/>
    </location>
</feature>
<feature type="disulfide bond" evidence="1">
    <location>
        <begin position="281"/>
        <end position="340"/>
    </location>
</feature>
<feature type="disulfide bond" evidence="1">
    <location>
        <begin position="309"/>
        <end position="372"/>
    </location>
</feature>
<feature type="disulfide bond" evidence="1">
    <location>
        <begin position="313"/>
        <end position="374"/>
    </location>
</feature>
<feature type="disulfide bond" description="Interchain" evidence="1">
    <location>
        <position position="339"/>
    </location>
</feature>
<dbReference type="EMBL" id="AF019625">
    <property type="protein sequence ID" value="AAB86692.1"/>
    <property type="status" value="ALT_INIT"/>
    <property type="molecule type" value="mRNA"/>
</dbReference>
<dbReference type="RefSeq" id="NP_001290090.1">
    <property type="nucleotide sequence ID" value="NM_001303161.1"/>
</dbReference>
<dbReference type="SMR" id="O42221"/>
<dbReference type="FunCoup" id="O42221">
    <property type="interactions" value="17"/>
</dbReference>
<dbReference type="GlyCosmos" id="O42221">
    <property type="glycosylation" value="1 site, No reported glycans"/>
</dbReference>
<dbReference type="Ensembl" id="ENSMGAT00000007052.2">
    <property type="protein sequence ID" value="ENSMGAP00000006304.1"/>
    <property type="gene ID" value="ENSMGAG00000006288.2"/>
</dbReference>
<dbReference type="GeneID" id="100303659"/>
<dbReference type="KEGG" id="mgp:100303659"/>
<dbReference type="CTD" id="2660"/>
<dbReference type="GeneTree" id="ENSGT00940000160657"/>
<dbReference type="HOGENOM" id="CLU_020515_6_1_1"/>
<dbReference type="InParanoid" id="O42221"/>
<dbReference type="OMA" id="CNACMWR"/>
<dbReference type="OrthoDB" id="5948587at2759"/>
<dbReference type="TreeFam" id="TF318514"/>
<dbReference type="Proteomes" id="UP000001645">
    <property type="component" value="Chromosome 7"/>
</dbReference>
<dbReference type="Bgee" id="ENSMGAG00000006288">
    <property type="expression patterns" value="Expressed in pectoralis major and 8 other cell types or tissues"/>
</dbReference>
<dbReference type="GO" id="GO:0005615">
    <property type="term" value="C:extracellular space"/>
    <property type="evidence" value="ECO:0000250"/>
    <property type="project" value="AgBase"/>
</dbReference>
<dbReference type="GO" id="GO:0005125">
    <property type="term" value="F:cytokine activity"/>
    <property type="evidence" value="ECO:0007669"/>
    <property type="project" value="UniProtKB-KW"/>
</dbReference>
<dbReference type="GO" id="GO:0008083">
    <property type="term" value="F:growth factor activity"/>
    <property type="evidence" value="ECO:0007669"/>
    <property type="project" value="UniProtKB-KW"/>
</dbReference>
<dbReference type="GO" id="GO:0008201">
    <property type="term" value="F:heparin binding"/>
    <property type="evidence" value="ECO:0007669"/>
    <property type="project" value="Ensembl"/>
</dbReference>
<dbReference type="GO" id="GO:0042803">
    <property type="term" value="F:protein homodimerization activity"/>
    <property type="evidence" value="ECO:0007669"/>
    <property type="project" value="Ensembl"/>
</dbReference>
<dbReference type="GO" id="GO:0043539">
    <property type="term" value="F:protein serine/threonine kinase activator activity"/>
    <property type="evidence" value="ECO:0007669"/>
    <property type="project" value="Ensembl"/>
</dbReference>
<dbReference type="GO" id="GO:0071549">
    <property type="term" value="P:cellular response to dexamethasone stimulus"/>
    <property type="evidence" value="ECO:0007669"/>
    <property type="project" value="Ensembl"/>
</dbReference>
<dbReference type="GO" id="GO:0046716">
    <property type="term" value="P:muscle cell cellular homeostasis"/>
    <property type="evidence" value="ECO:0007669"/>
    <property type="project" value="Ensembl"/>
</dbReference>
<dbReference type="GO" id="GO:0033002">
    <property type="term" value="P:muscle cell proliferation"/>
    <property type="evidence" value="ECO:0000250"/>
    <property type="project" value="AgBase"/>
</dbReference>
<dbReference type="GO" id="GO:0014839">
    <property type="term" value="P:myoblast migration involved in skeletal muscle regeneration"/>
    <property type="evidence" value="ECO:0000250"/>
    <property type="project" value="UniProtKB"/>
</dbReference>
<dbReference type="GO" id="GO:0046627">
    <property type="term" value="P:negative regulation of insulin receptor signaling pathway"/>
    <property type="evidence" value="ECO:0007669"/>
    <property type="project" value="Ensembl"/>
</dbReference>
<dbReference type="GO" id="GO:0045662">
    <property type="term" value="P:negative regulation of myoblast differentiation"/>
    <property type="evidence" value="ECO:0007669"/>
    <property type="project" value="Ensembl"/>
</dbReference>
<dbReference type="GO" id="GO:2000818">
    <property type="term" value="P:negative regulation of myoblast proliferation"/>
    <property type="evidence" value="ECO:0000314"/>
    <property type="project" value="AgBase"/>
</dbReference>
<dbReference type="GO" id="GO:0051898">
    <property type="term" value="P:negative regulation of phosphatidylinositol 3-kinase/protein kinase B signal transduction"/>
    <property type="evidence" value="ECO:0007669"/>
    <property type="project" value="Ensembl"/>
</dbReference>
<dbReference type="GO" id="GO:1902725">
    <property type="term" value="P:negative regulation of satellite cell differentiation"/>
    <property type="evidence" value="ECO:0000314"/>
    <property type="project" value="AgBase"/>
</dbReference>
<dbReference type="GO" id="GO:1902723">
    <property type="term" value="P:negative regulation of skeletal muscle satellite cell proliferation"/>
    <property type="evidence" value="ECO:0000314"/>
    <property type="project" value="AgBase"/>
</dbReference>
<dbReference type="GO" id="GO:0048632">
    <property type="term" value="P:negative regulation of skeletal muscle tissue growth"/>
    <property type="evidence" value="ECO:0007669"/>
    <property type="project" value="Ensembl"/>
</dbReference>
<dbReference type="GO" id="GO:0045893">
    <property type="term" value="P:positive regulation of DNA-templated transcription"/>
    <property type="evidence" value="ECO:0007669"/>
    <property type="project" value="Ensembl"/>
</dbReference>
<dbReference type="GO" id="GO:0010592">
    <property type="term" value="P:positive regulation of lamellipodium assembly"/>
    <property type="evidence" value="ECO:0000250"/>
    <property type="project" value="UniProtKB"/>
</dbReference>
<dbReference type="GO" id="GO:0010759">
    <property type="term" value="P:positive regulation of macrophage chemotaxis"/>
    <property type="evidence" value="ECO:0000250"/>
    <property type="project" value="UniProtKB"/>
</dbReference>
<dbReference type="GO" id="GO:0014816">
    <property type="term" value="P:skeletal muscle satellite cell differentiation"/>
    <property type="evidence" value="ECO:0007669"/>
    <property type="project" value="Ensembl"/>
</dbReference>
<dbReference type="GO" id="GO:0007179">
    <property type="term" value="P:transforming growth factor beta receptor signaling pathway"/>
    <property type="evidence" value="ECO:0007669"/>
    <property type="project" value="Ensembl"/>
</dbReference>
<dbReference type="CDD" id="cd19388">
    <property type="entry name" value="TGF_beta_GDF8"/>
    <property type="match status" value="1"/>
</dbReference>
<dbReference type="FunFam" id="2.60.120.970:FF:000001">
    <property type="entry name" value="Growth/differentiation factor 8"/>
    <property type="match status" value="1"/>
</dbReference>
<dbReference type="FunFam" id="2.10.90.10:FF:000006">
    <property type="entry name" value="growth/differentiation factor 8"/>
    <property type="match status" value="1"/>
</dbReference>
<dbReference type="Gene3D" id="2.60.120.970">
    <property type="match status" value="1"/>
</dbReference>
<dbReference type="Gene3D" id="2.10.90.10">
    <property type="entry name" value="Cystine-knot cytokines"/>
    <property type="match status" value="1"/>
</dbReference>
<dbReference type="InterPro" id="IPR029034">
    <property type="entry name" value="Cystine-knot_cytokine"/>
</dbReference>
<dbReference type="InterPro" id="IPR001839">
    <property type="entry name" value="TGF-b_C"/>
</dbReference>
<dbReference type="InterPro" id="IPR001111">
    <property type="entry name" value="TGF-b_propeptide"/>
</dbReference>
<dbReference type="InterPro" id="IPR015615">
    <property type="entry name" value="TGF-beta-rel"/>
</dbReference>
<dbReference type="InterPro" id="IPR017948">
    <property type="entry name" value="TGFb_CS"/>
</dbReference>
<dbReference type="PANTHER" id="PTHR11848:SF150">
    <property type="entry name" value="GROWTH_DIFFERENTIATION FACTOR 8"/>
    <property type="match status" value="1"/>
</dbReference>
<dbReference type="PANTHER" id="PTHR11848">
    <property type="entry name" value="TGF-BETA FAMILY"/>
    <property type="match status" value="1"/>
</dbReference>
<dbReference type="Pfam" id="PF00019">
    <property type="entry name" value="TGF_beta"/>
    <property type="match status" value="1"/>
</dbReference>
<dbReference type="Pfam" id="PF00688">
    <property type="entry name" value="TGFb_propeptide"/>
    <property type="match status" value="1"/>
</dbReference>
<dbReference type="SMART" id="SM00204">
    <property type="entry name" value="TGFB"/>
    <property type="match status" value="1"/>
</dbReference>
<dbReference type="SUPFAM" id="SSF57501">
    <property type="entry name" value="Cystine-knot cytokines"/>
    <property type="match status" value="1"/>
</dbReference>
<dbReference type="PROSITE" id="PS00250">
    <property type="entry name" value="TGF_BETA_1"/>
    <property type="match status" value="1"/>
</dbReference>
<dbReference type="PROSITE" id="PS51362">
    <property type="entry name" value="TGF_BETA_2"/>
    <property type="match status" value="1"/>
</dbReference>
<name>GDF8_MELGA</name>
<accession>O42221</accession>
<protein>
    <recommendedName>
        <fullName>Growth/differentiation factor 8</fullName>
        <shortName>GDF-8</shortName>
    </recommendedName>
    <alternativeName>
        <fullName>Myostatin</fullName>
    </alternativeName>
</protein>
<reference key="1">
    <citation type="journal article" date="1997" name="Proc. Natl. Acad. Sci. U.S.A.">
        <title>Double muscling in cattle due to mutations in the myostatin gene.</title>
        <authorList>
            <person name="McPherron A.C."/>
            <person name="Lee S.-J."/>
        </authorList>
    </citation>
    <scope>NUCLEOTIDE SEQUENCE [MRNA]</scope>
    <source>
        <tissue>Skeletal muscle</tissue>
    </source>
</reference>